<dbReference type="EMBL" id="CP001063">
    <property type="protein sequence ID" value="ACD09276.1"/>
    <property type="molecule type" value="Genomic_DNA"/>
</dbReference>
<dbReference type="RefSeq" id="WP_000290727.1">
    <property type="nucleotide sequence ID" value="NC_010658.1"/>
</dbReference>
<dbReference type="SMR" id="B2U532"/>
<dbReference type="STRING" id="344609.SbBS512_E2235"/>
<dbReference type="GeneID" id="93776319"/>
<dbReference type="KEGG" id="sbc:SbBS512_E2235"/>
<dbReference type="HOGENOM" id="CLU_129084_2_1_6"/>
<dbReference type="Proteomes" id="UP000001030">
    <property type="component" value="Chromosome"/>
</dbReference>
<dbReference type="GO" id="GO:0015934">
    <property type="term" value="C:large ribosomal subunit"/>
    <property type="evidence" value="ECO:0007669"/>
    <property type="project" value="InterPro"/>
</dbReference>
<dbReference type="GO" id="GO:0003735">
    <property type="term" value="F:structural constituent of ribosome"/>
    <property type="evidence" value="ECO:0007669"/>
    <property type="project" value="InterPro"/>
</dbReference>
<dbReference type="GO" id="GO:0006412">
    <property type="term" value="P:translation"/>
    <property type="evidence" value="ECO:0007669"/>
    <property type="project" value="UniProtKB-UniRule"/>
</dbReference>
<dbReference type="HAMAP" id="MF_00340">
    <property type="entry name" value="Ribosomal_bL32"/>
    <property type="match status" value="1"/>
</dbReference>
<dbReference type="InterPro" id="IPR002677">
    <property type="entry name" value="Ribosomal_bL32"/>
</dbReference>
<dbReference type="InterPro" id="IPR044957">
    <property type="entry name" value="Ribosomal_bL32_bact"/>
</dbReference>
<dbReference type="InterPro" id="IPR011332">
    <property type="entry name" value="Ribosomal_zn-bd"/>
</dbReference>
<dbReference type="NCBIfam" id="TIGR01031">
    <property type="entry name" value="rpmF_bact"/>
    <property type="match status" value="1"/>
</dbReference>
<dbReference type="PANTHER" id="PTHR35534">
    <property type="entry name" value="50S RIBOSOMAL PROTEIN L32"/>
    <property type="match status" value="1"/>
</dbReference>
<dbReference type="PANTHER" id="PTHR35534:SF1">
    <property type="entry name" value="LARGE RIBOSOMAL SUBUNIT PROTEIN BL32"/>
    <property type="match status" value="1"/>
</dbReference>
<dbReference type="Pfam" id="PF01783">
    <property type="entry name" value="Ribosomal_L32p"/>
    <property type="match status" value="1"/>
</dbReference>
<dbReference type="SUPFAM" id="SSF57829">
    <property type="entry name" value="Zn-binding ribosomal proteins"/>
    <property type="match status" value="1"/>
</dbReference>
<sequence length="57" mass="6446">MAVQQNKPTRSKRGMRRSHDALTAVTSLSVDKTSGEKHLRHHITADGYYRGRKVIAK</sequence>
<name>RL32_SHIB3</name>
<evidence type="ECO:0000255" key="1">
    <source>
        <dbReference type="HAMAP-Rule" id="MF_00340"/>
    </source>
</evidence>
<evidence type="ECO:0000256" key="2">
    <source>
        <dbReference type="SAM" id="MobiDB-lite"/>
    </source>
</evidence>
<evidence type="ECO:0000305" key="3"/>
<feature type="chain" id="PRO_1000120173" description="Large ribosomal subunit protein bL32">
    <location>
        <begin position="1"/>
        <end position="57"/>
    </location>
</feature>
<feature type="region of interest" description="Disordered" evidence="2">
    <location>
        <begin position="1"/>
        <end position="38"/>
    </location>
</feature>
<keyword id="KW-1185">Reference proteome</keyword>
<keyword id="KW-0687">Ribonucleoprotein</keyword>
<keyword id="KW-0689">Ribosomal protein</keyword>
<accession>B2U532</accession>
<reference key="1">
    <citation type="submission" date="2008-05" db="EMBL/GenBank/DDBJ databases">
        <title>Complete sequence of Shigella boydii serotype 18 strain BS512.</title>
        <authorList>
            <person name="Rasko D.A."/>
            <person name="Rosovitz M."/>
            <person name="Maurelli A.T."/>
            <person name="Myers G."/>
            <person name="Seshadri R."/>
            <person name="Cer R."/>
            <person name="Jiang L."/>
            <person name="Ravel J."/>
            <person name="Sebastian Y."/>
        </authorList>
    </citation>
    <scope>NUCLEOTIDE SEQUENCE [LARGE SCALE GENOMIC DNA]</scope>
    <source>
        <strain>CDC 3083-94 / BS512</strain>
    </source>
</reference>
<organism>
    <name type="scientific">Shigella boydii serotype 18 (strain CDC 3083-94 / BS512)</name>
    <dbReference type="NCBI Taxonomy" id="344609"/>
    <lineage>
        <taxon>Bacteria</taxon>
        <taxon>Pseudomonadati</taxon>
        <taxon>Pseudomonadota</taxon>
        <taxon>Gammaproteobacteria</taxon>
        <taxon>Enterobacterales</taxon>
        <taxon>Enterobacteriaceae</taxon>
        <taxon>Shigella</taxon>
    </lineage>
</organism>
<proteinExistence type="inferred from homology"/>
<gene>
    <name evidence="1" type="primary">rpmF</name>
    <name type="ordered locus">SbBS512_E2235</name>
</gene>
<protein>
    <recommendedName>
        <fullName evidence="1">Large ribosomal subunit protein bL32</fullName>
    </recommendedName>
    <alternativeName>
        <fullName evidence="3">50S ribosomal protein L32</fullName>
    </alternativeName>
</protein>
<comment type="similarity">
    <text evidence="1">Belongs to the bacterial ribosomal protein bL32 family.</text>
</comment>